<sequence>MYKFSAIEIRDQFIRGDVSASAITQHYLNRIAKYDQKIGAFLSVYEEQAMMQAKQLDQKRLANQPLGKLAGIPIAIKDNILVKGEISTCGSKFLTNFKSPYQASVIEYLLAEGAVIIGKTNMDEFAMGSSTENSALQKTSNPWNLKCTPGGSSGGSAAAVAGRLSPLSLGSDTGGSVRLPASFCGVVGFKPTYGRVSRFGLVAYGSSLDQIGPLATNTADTALLMEVIGRHCPKDSTSIALGPEDYLSQFKDSIAGMKIGVPWEFLENLADEPKKIFQQSVNLMKQLGAEIVDIDLSILKYSLAVYYILATAEASTNLARFDGIRYGQRSPKAKTLEEVYDFSKEEGFGAEVKRRILLGTYVLSAGYQDAYYKKAQKVRTLILRSYKEAFAKCDLIASPVSPFAAFEIGAIKDPLQMYLEDIYTIGINLAGLPAVSIPNGFSKDGKPMGLQLIGAQKHDREVLNAAHILEKSLAFHPAIPELVKEETSA</sequence>
<dbReference type="EC" id="6.3.5.7" evidence="1"/>
<dbReference type="EMBL" id="BX908798">
    <property type="protein sequence ID" value="CAF23394.1"/>
    <property type="molecule type" value="Genomic_DNA"/>
</dbReference>
<dbReference type="RefSeq" id="WP_011175220.1">
    <property type="nucleotide sequence ID" value="NC_005861.2"/>
</dbReference>
<dbReference type="SMR" id="Q6MDF5"/>
<dbReference type="STRING" id="264201.pc0670"/>
<dbReference type="KEGG" id="pcu:PC_RS03210"/>
<dbReference type="eggNOG" id="COG0154">
    <property type="taxonomic scope" value="Bacteria"/>
</dbReference>
<dbReference type="HOGENOM" id="CLU_009600_0_3_0"/>
<dbReference type="OrthoDB" id="9811471at2"/>
<dbReference type="Proteomes" id="UP000000529">
    <property type="component" value="Chromosome"/>
</dbReference>
<dbReference type="GO" id="GO:0030956">
    <property type="term" value="C:glutamyl-tRNA(Gln) amidotransferase complex"/>
    <property type="evidence" value="ECO:0007669"/>
    <property type="project" value="InterPro"/>
</dbReference>
<dbReference type="GO" id="GO:0005524">
    <property type="term" value="F:ATP binding"/>
    <property type="evidence" value="ECO:0007669"/>
    <property type="project" value="UniProtKB-KW"/>
</dbReference>
<dbReference type="GO" id="GO:0050567">
    <property type="term" value="F:glutaminyl-tRNA synthase (glutamine-hydrolyzing) activity"/>
    <property type="evidence" value="ECO:0007669"/>
    <property type="project" value="UniProtKB-UniRule"/>
</dbReference>
<dbReference type="GO" id="GO:0006412">
    <property type="term" value="P:translation"/>
    <property type="evidence" value="ECO:0007669"/>
    <property type="project" value="UniProtKB-UniRule"/>
</dbReference>
<dbReference type="Gene3D" id="3.90.1300.10">
    <property type="entry name" value="Amidase signature (AS) domain"/>
    <property type="match status" value="1"/>
</dbReference>
<dbReference type="HAMAP" id="MF_00120">
    <property type="entry name" value="GatA"/>
    <property type="match status" value="1"/>
</dbReference>
<dbReference type="InterPro" id="IPR000120">
    <property type="entry name" value="Amidase"/>
</dbReference>
<dbReference type="InterPro" id="IPR020556">
    <property type="entry name" value="Amidase_CS"/>
</dbReference>
<dbReference type="InterPro" id="IPR023631">
    <property type="entry name" value="Amidase_dom"/>
</dbReference>
<dbReference type="InterPro" id="IPR036928">
    <property type="entry name" value="AS_sf"/>
</dbReference>
<dbReference type="InterPro" id="IPR004412">
    <property type="entry name" value="GatA"/>
</dbReference>
<dbReference type="NCBIfam" id="TIGR00132">
    <property type="entry name" value="gatA"/>
    <property type="match status" value="1"/>
</dbReference>
<dbReference type="PANTHER" id="PTHR11895:SF151">
    <property type="entry name" value="GLUTAMYL-TRNA(GLN) AMIDOTRANSFERASE SUBUNIT A"/>
    <property type="match status" value="1"/>
</dbReference>
<dbReference type="PANTHER" id="PTHR11895">
    <property type="entry name" value="TRANSAMIDASE"/>
    <property type="match status" value="1"/>
</dbReference>
<dbReference type="Pfam" id="PF01425">
    <property type="entry name" value="Amidase"/>
    <property type="match status" value="1"/>
</dbReference>
<dbReference type="PIRSF" id="PIRSF001221">
    <property type="entry name" value="Amidase_fungi"/>
    <property type="match status" value="1"/>
</dbReference>
<dbReference type="SUPFAM" id="SSF75304">
    <property type="entry name" value="Amidase signature (AS) enzymes"/>
    <property type="match status" value="1"/>
</dbReference>
<dbReference type="PROSITE" id="PS00571">
    <property type="entry name" value="AMIDASES"/>
    <property type="match status" value="1"/>
</dbReference>
<protein>
    <recommendedName>
        <fullName evidence="1">Glutamyl-tRNA(Gln) amidotransferase subunit A</fullName>
        <shortName evidence="1">Glu-ADT subunit A</shortName>
        <ecNumber evidence="1">6.3.5.7</ecNumber>
    </recommendedName>
</protein>
<accession>Q6MDF5</accession>
<gene>
    <name evidence="1" type="primary">gatA</name>
    <name type="ordered locus">pc0670</name>
</gene>
<keyword id="KW-0067">ATP-binding</keyword>
<keyword id="KW-0436">Ligase</keyword>
<keyword id="KW-0547">Nucleotide-binding</keyword>
<keyword id="KW-0648">Protein biosynthesis</keyword>
<keyword id="KW-1185">Reference proteome</keyword>
<organism>
    <name type="scientific">Protochlamydia amoebophila (strain UWE25)</name>
    <dbReference type="NCBI Taxonomy" id="264201"/>
    <lineage>
        <taxon>Bacteria</taxon>
        <taxon>Pseudomonadati</taxon>
        <taxon>Chlamydiota</taxon>
        <taxon>Chlamydiia</taxon>
        <taxon>Parachlamydiales</taxon>
        <taxon>Parachlamydiaceae</taxon>
        <taxon>Candidatus Protochlamydia</taxon>
    </lineage>
</organism>
<proteinExistence type="inferred from homology"/>
<name>GATA_PARUW</name>
<comment type="function">
    <text evidence="1">Allows the formation of correctly charged Gln-tRNA(Gln) through the transamidation of misacylated Glu-tRNA(Gln) in organisms which lack glutaminyl-tRNA synthetase. The reaction takes place in the presence of glutamine and ATP through an activated gamma-phospho-Glu-tRNA(Gln).</text>
</comment>
<comment type="catalytic activity">
    <reaction evidence="1">
        <text>L-glutamyl-tRNA(Gln) + L-glutamine + ATP + H2O = L-glutaminyl-tRNA(Gln) + L-glutamate + ADP + phosphate + H(+)</text>
        <dbReference type="Rhea" id="RHEA:17521"/>
        <dbReference type="Rhea" id="RHEA-COMP:9681"/>
        <dbReference type="Rhea" id="RHEA-COMP:9684"/>
        <dbReference type="ChEBI" id="CHEBI:15377"/>
        <dbReference type="ChEBI" id="CHEBI:15378"/>
        <dbReference type="ChEBI" id="CHEBI:29985"/>
        <dbReference type="ChEBI" id="CHEBI:30616"/>
        <dbReference type="ChEBI" id="CHEBI:43474"/>
        <dbReference type="ChEBI" id="CHEBI:58359"/>
        <dbReference type="ChEBI" id="CHEBI:78520"/>
        <dbReference type="ChEBI" id="CHEBI:78521"/>
        <dbReference type="ChEBI" id="CHEBI:456216"/>
        <dbReference type="EC" id="6.3.5.7"/>
    </reaction>
</comment>
<comment type="subunit">
    <text evidence="1">Heterotrimer of A, B and C subunits.</text>
</comment>
<comment type="similarity">
    <text evidence="1">Belongs to the amidase family. GatA subfamily.</text>
</comment>
<reference key="1">
    <citation type="journal article" date="2004" name="Science">
        <title>Illuminating the evolutionary history of chlamydiae.</title>
        <authorList>
            <person name="Horn M."/>
            <person name="Collingro A."/>
            <person name="Schmitz-Esser S."/>
            <person name="Beier C.L."/>
            <person name="Purkhold U."/>
            <person name="Fartmann B."/>
            <person name="Brandt P."/>
            <person name="Nyakatura G.J."/>
            <person name="Droege M."/>
            <person name="Frishman D."/>
            <person name="Rattei T."/>
            <person name="Mewes H.-W."/>
            <person name="Wagner M."/>
        </authorList>
    </citation>
    <scope>NUCLEOTIDE SEQUENCE [LARGE SCALE GENOMIC DNA]</scope>
    <source>
        <strain>UWE25</strain>
    </source>
</reference>
<feature type="chain" id="PRO_0000241127" description="Glutamyl-tRNA(Gln) amidotransferase subunit A">
    <location>
        <begin position="1"/>
        <end position="489"/>
    </location>
</feature>
<feature type="active site" description="Charge relay system" evidence="1">
    <location>
        <position position="77"/>
    </location>
</feature>
<feature type="active site" description="Charge relay system" evidence="1">
    <location>
        <position position="152"/>
    </location>
</feature>
<feature type="active site" description="Acyl-ester intermediate" evidence="1">
    <location>
        <position position="176"/>
    </location>
</feature>
<evidence type="ECO:0000255" key="1">
    <source>
        <dbReference type="HAMAP-Rule" id="MF_00120"/>
    </source>
</evidence>